<gene>
    <name evidence="3" type="primary">ndua-5</name>
    <name evidence="3" type="ORF">C33A12.1</name>
</gene>
<reference key="1">
    <citation type="journal article" date="1998" name="Science">
        <title>Genome sequence of the nematode C. elegans: a platform for investigating biology.</title>
        <authorList>
            <consortium name="The C. elegans sequencing consortium"/>
        </authorList>
    </citation>
    <scope>NUCLEOTIDE SEQUENCE [LARGE SCALE GENOMIC DNA]</scope>
    <source>
        <strain>Bristol N2</strain>
    </source>
</reference>
<accession>Q18359</accession>
<dbReference type="EMBL" id="Z68493">
    <property type="protein sequence ID" value="CAA92789.1"/>
    <property type="molecule type" value="Genomic_DNA"/>
</dbReference>
<dbReference type="PIR" id="T19659">
    <property type="entry name" value="T19659"/>
</dbReference>
<dbReference type="SMR" id="Q18359"/>
<dbReference type="BioGRID" id="42891">
    <property type="interactions" value="37"/>
</dbReference>
<dbReference type="FunCoup" id="Q18359">
    <property type="interactions" value="1583"/>
</dbReference>
<dbReference type="STRING" id="6239.C33A12.1.1"/>
<dbReference type="PaxDb" id="6239-C33A12.1"/>
<dbReference type="PeptideAtlas" id="Q18359"/>
<dbReference type="EnsemblMetazoa" id="C33A12.1.1">
    <property type="protein sequence ID" value="C33A12.1.1"/>
    <property type="gene ID" value="WBGene00007880"/>
</dbReference>
<dbReference type="KEGG" id="cel:CELE_C33A12.1"/>
<dbReference type="UCSC" id="C33A12.1">
    <property type="organism name" value="c. elegans"/>
</dbReference>
<dbReference type="AGR" id="WB:WBGene00007880"/>
<dbReference type="CTD" id="177786"/>
<dbReference type="WormBase" id="C33A12.1">
    <property type="protein sequence ID" value="CE05347"/>
    <property type="gene ID" value="WBGene00007880"/>
    <property type="gene designation" value="ndua-5"/>
</dbReference>
<dbReference type="eggNOG" id="KOG3365">
    <property type="taxonomic scope" value="Eukaryota"/>
</dbReference>
<dbReference type="GeneTree" id="ENSGT00390000008099"/>
<dbReference type="HOGENOM" id="CLU_099943_2_0_1"/>
<dbReference type="InParanoid" id="Q18359"/>
<dbReference type="OMA" id="ENQWKWP"/>
<dbReference type="OrthoDB" id="286811at2759"/>
<dbReference type="PhylomeDB" id="Q18359"/>
<dbReference type="PRO" id="PR:Q18359"/>
<dbReference type="Proteomes" id="UP000001940">
    <property type="component" value="Chromosome IV"/>
</dbReference>
<dbReference type="Bgee" id="WBGene00007880">
    <property type="expression patterns" value="Expressed in pharyngeal muscle cell (C elegans) and 4 other cell types or tissues"/>
</dbReference>
<dbReference type="GO" id="GO:0005743">
    <property type="term" value="C:mitochondrial inner membrane"/>
    <property type="evidence" value="ECO:0007669"/>
    <property type="project" value="UniProtKB-SubCell"/>
</dbReference>
<dbReference type="GO" id="GO:0045271">
    <property type="term" value="C:respiratory chain complex I"/>
    <property type="evidence" value="ECO:0000250"/>
    <property type="project" value="WormBase"/>
</dbReference>
<dbReference type="GO" id="GO:0006120">
    <property type="term" value="P:mitochondrial electron transport, NADH to ubiquinone"/>
    <property type="evidence" value="ECO:0000305"/>
    <property type="project" value="WormBase"/>
</dbReference>
<dbReference type="GO" id="GO:0022904">
    <property type="term" value="P:respiratory electron transport chain"/>
    <property type="evidence" value="ECO:0000318"/>
    <property type="project" value="GO_Central"/>
</dbReference>
<dbReference type="InterPro" id="IPR006806">
    <property type="entry name" value="NDUFA5"/>
</dbReference>
<dbReference type="PANTHER" id="PTHR12653:SF0">
    <property type="entry name" value="NADH DEHYDROGENASE [UBIQUINONE] 1 ALPHA SUBCOMPLEX SUBUNIT 5"/>
    <property type="match status" value="1"/>
</dbReference>
<dbReference type="PANTHER" id="PTHR12653">
    <property type="entry name" value="NADH-UBIQUINONE OXIDOREDUCTASE 13 KD-B SUBUNIT"/>
    <property type="match status" value="1"/>
</dbReference>
<dbReference type="Pfam" id="PF04716">
    <property type="entry name" value="ETC_C1_NDUFA5"/>
    <property type="match status" value="1"/>
</dbReference>
<protein>
    <recommendedName>
        <fullName>Probable NADH dehydrogenase [ubiquinone] 1 alpha subcomplex subunit 5</fullName>
    </recommendedName>
</protein>
<evidence type="ECO:0000250" key="1"/>
<evidence type="ECO:0000305" key="2"/>
<evidence type="ECO:0000312" key="3">
    <source>
        <dbReference type="WormBase" id="C33A12.1"/>
    </source>
</evidence>
<organism>
    <name type="scientific">Caenorhabditis elegans</name>
    <dbReference type="NCBI Taxonomy" id="6239"/>
    <lineage>
        <taxon>Eukaryota</taxon>
        <taxon>Metazoa</taxon>
        <taxon>Ecdysozoa</taxon>
        <taxon>Nematoda</taxon>
        <taxon>Chromadorea</taxon>
        <taxon>Rhabditida</taxon>
        <taxon>Rhabditina</taxon>
        <taxon>Rhabditomorpha</taxon>
        <taxon>Rhabditoidea</taxon>
        <taxon>Rhabditidae</taxon>
        <taxon>Peloderinae</taxon>
        <taxon>Caenorhabditis</taxon>
    </lineage>
</organism>
<sequence>MSSRFLRTAVARATQQRSMYENPYINRFKARSKVSEDFHKKTTGITGLFVNEHPHRALTVVYGRILRALEQIPRDAAYRKYTEAVVKQRLALVQAENDIKKLEEKIGMGQIEEVIEQAEYELETTRAIVDSKAWEPLVESAPKGQWSWPV</sequence>
<comment type="function">
    <text evidence="1">Accessory subunit of the mitochondrial membrane respiratory chain NADH dehydrogenase (Complex I), that is believed not to be involved in catalysis. Complex I functions in the transfer of electrons from NADH to the respiratory chain. The immediate electron acceptor for the enzyme is believed to be ubiquinone (By similarity).</text>
</comment>
<comment type="subunit">
    <text evidence="1">Complex I is composed of 45 different subunits.</text>
</comment>
<comment type="subcellular location">
    <subcellularLocation>
        <location evidence="1">Mitochondrion inner membrane</location>
        <topology evidence="1">Peripheral membrane protein</topology>
        <orientation evidence="1">Matrix side</orientation>
    </subcellularLocation>
</comment>
<comment type="similarity">
    <text evidence="2">Belongs to the complex I NDUFA5 subunit family.</text>
</comment>
<proteinExistence type="inferred from homology"/>
<name>NDUA5_CAEEL</name>
<feature type="chain" id="PRO_0000118636" description="Probable NADH dehydrogenase [ubiquinone] 1 alpha subcomplex subunit 5">
    <location>
        <begin position="1"/>
        <end position="150"/>
    </location>
</feature>
<keyword id="KW-0249">Electron transport</keyword>
<keyword id="KW-0472">Membrane</keyword>
<keyword id="KW-0496">Mitochondrion</keyword>
<keyword id="KW-0999">Mitochondrion inner membrane</keyword>
<keyword id="KW-1185">Reference proteome</keyword>
<keyword id="KW-0679">Respiratory chain</keyword>
<keyword id="KW-0813">Transport</keyword>